<comment type="function">
    <text evidence="1">Functions in complex with FlhC as a master transcriptional regulator that regulates transcription of several flagellar and non-flagellar operons by binding to their promoter region. Activates expression of class 2 flagellar genes, including fliA, which is a flagellum-specific sigma factor that turns on the class 3 genes. Also regulates genes whose products function in a variety of physiological pathways.</text>
</comment>
<comment type="subunit">
    <text evidence="1">Homodimer; disulfide-linked. Forms a heterohexamer composed of two FlhC and four FlhD subunits. Each FlhC binds a FlhD dimer, forming a heterotrimer, and a hexamer assembles by dimerization of two heterotrimers.</text>
</comment>
<comment type="subcellular location">
    <subcellularLocation>
        <location evidence="1">Cytoplasm</location>
    </subcellularLocation>
</comment>
<comment type="domain">
    <text evidence="1">The C-terminal region contains a putative helix-turn-helix (HTH) motif, suggesting that this region may bind DNA.</text>
</comment>
<comment type="similarity">
    <text evidence="1">Belongs to the FlhD family.</text>
</comment>
<dbReference type="EMBL" id="CP001048">
    <property type="protein sequence ID" value="ACC89449.1"/>
    <property type="molecule type" value="Genomic_DNA"/>
</dbReference>
<dbReference type="RefSeq" id="WP_011192574.1">
    <property type="nucleotide sequence ID" value="NZ_CP009780.1"/>
</dbReference>
<dbReference type="SMR" id="B2K6E0"/>
<dbReference type="GeneID" id="96665894"/>
<dbReference type="KEGG" id="ypb:YPTS_2488"/>
<dbReference type="PATRIC" id="fig|502801.10.peg.1900"/>
<dbReference type="GO" id="GO:0005737">
    <property type="term" value="C:cytoplasm"/>
    <property type="evidence" value="ECO:0007669"/>
    <property type="project" value="UniProtKB-SubCell"/>
</dbReference>
<dbReference type="GO" id="GO:0003677">
    <property type="term" value="F:DNA binding"/>
    <property type="evidence" value="ECO:0007669"/>
    <property type="project" value="UniProtKB-UniRule"/>
</dbReference>
<dbReference type="GO" id="GO:0044780">
    <property type="term" value="P:bacterial-type flagellum assembly"/>
    <property type="evidence" value="ECO:0007669"/>
    <property type="project" value="InterPro"/>
</dbReference>
<dbReference type="GO" id="GO:0045893">
    <property type="term" value="P:positive regulation of DNA-templated transcription"/>
    <property type="evidence" value="ECO:0007669"/>
    <property type="project" value="InterPro"/>
</dbReference>
<dbReference type="GO" id="GO:1902208">
    <property type="term" value="P:regulation of bacterial-type flagellum assembly"/>
    <property type="evidence" value="ECO:0007669"/>
    <property type="project" value="UniProtKB-UniRule"/>
</dbReference>
<dbReference type="Gene3D" id="1.10.4000.10">
    <property type="entry name" value="Flagellar transcriptional activator FlhD"/>
    <property type="match status" value="1"/>
</dbReference>
<dbReference type="HAMAP" id="MF_00725">
    <property type="entry name" value="FlhD"/>
    <property type="match status" value="1"/>
</dbReference>
<dbReference type="InterPro" id="IPR023559">
    <property type="entry name" value="Flagellar_FlhD"/>
</dbReference>
<dbReference type="InterPro" id="IPR036194">
    <property type="entry name" value="FlhD_sf"/>
</dbReference>
<dbReference type="NCBIfam" id="NF002783">
    <property type="entry name" value="PRK02909.1-1"/>
    <property type="match status" value="1"/>
</dbReference>
<dbReference type="Pfam" id="PF05247">
    <property type="entry name" value="FlhD"/>
    <property type="match status" value="1"/>
</dbReference>
<dbReference type="SUPFAM" id="SSF63592">
    <property type="entry name" value="Flagellar transcriptional activator FlhD"/>
    <property type="match status" value="1"/>
</dbReference>
<evidence type="ECO:0000255" key="1">
    <source>
        <dbReference type="HAMAP-Rule" id="MF_00725"/>
    </source>
</evidence>
<sequence>MSTSELLKHIYDINLSYLLLAQRLINDEKASAMFRLGITDTMADALSQLTLPQMVKLAETNQLVCHFRFSDHNTIHHLTKESRVDDLQQIHTGILLSSHLLHELSLKDDSTPKKRA</sequence>
<organism>
    <name type="scientific">Yersinia pseudotuberculosis serotype IB (strain PB1/+)</name>
    <dbReference type="NCBI Taxonomy" id="502801"/>
    <lineage>
        <taxon>Bacteria</taxon>
        <taxon>Pseudomonadati</taxon>
        <taxon>Pseudomonadota</taxon>
        <taxon>Gammaproteobacteria</taxon>
        <taxon>Enterobacterales</taxon>
        <taxon>Yersiniaceae</taxon>
        <taxon>Yersinia</taxon>
    </lineage>
</organism>
<proteinExistence type="inferred from homology"/>
<gene>
    <name evidence="1" type="primary">flhD</name>
    <name type="ordered locus">YPTS_2488</name>
</gene>
<protein>
    <recommendedName>
        <fullName evidence="1">Flagellar transcriptional regulator FlhD</fullName>
    </recommendedName>
</protein>
<feature type="chain" id="PRO_1000132696" description="Flagellar transcriptional regulator FlhD">
    <location>
        <begin position="1"/>
        <end position="116"/>
    </location>
</feature>
<feature type="disulfide bond" description="Interchain" evidence="1">
    <location>
        <position position="65"/>
    </location>
</feature>
<accession>B2K6E0</accession>
<keyword id="KW-0010">Activator</keyword>
<keyword id="KW-1005">Bacterial flagellum biogenesis</keyword>
<keyword id="KW-0963">Cytoplasm</keyword>
<keyword id="KW-1015">Disulfide bond</keyword>
<keyword id="KW-0238">DNA-binding</keyword>
<keyword id="KW-0804">Transcription</keyword>
<keyword id="KW-0805">Transcription regulation</keyword>
<name>FLHD_YERPB</name>
<reference key="1">
    <citation type="submission" date="2008-04" db="EMBL/GenBank/DDBJ databases">
        <title>Complete sequence of Yersinia pseudotuberculosis PB1/+.</title>
        <authorList>
            <person name="Copeland A."/>
            <person name="Lucas S."/>
            <person name="Lapidus A."/>
            <person name="Glavina del Rio T."/>
            <person name="Dalin E."/>
            <person name="Tice H."/>
            <person name="Bruce D."/>
            <person name="Goodwin L."/>
            <person name="Pitluck S."/>
            <person name="Munk A.C."/>
            <person name="Brettin T."/>
            <person name="Detter J.C."/>
            <person name="Han C."/>
            <person name="Tapia R."/>
            <person name="Schmutz J."/>
            <person name="Larimer F."/>
            <person name="Land M."/>
            <person name="Hauser L."/>
            <person name="Challacombe J.F."/>
            <person name="Green L."/>
            <person name="Lindler L.E."/>
            <person name="Nikolich M.P."/>
            <person name="Richardson P."/>
        </authorList>
    </citation>
    <scope>NUCLEOTIDE SEQUENCE [LARGE SCALE GENOMIC DNA]</scope>
    <source>
        <strain>PB1/+</strain>
    </source>
</reference>